<gene>
    <name type="primary">PYL11</name>
    <name type="synonym">RCAR5</name>
    <name type="ordered locus">At5g45860</name>
    <name type="ORF">K15I22.6</name>
</gene>
<organism>
    <name type="scientific">Arabidopsis thaliana</name>
    <name type="common">Mouse-ear cress</name>
    <dbReference type="NCBI Taxonomy" id="3702"/>
    <lineage>
        <taxon>Eukaryota</taxon>
        <taxon>Viridiplantae</taxon>
        <taxon>Streptophyta</taxon>
        <taxon>Embryophyta</taxon>
        <taxon>Tracheophyta</taxon>
        <taxon>Spermatophyta</taxon>
        <taxon>Magnoliopsida</taxon>
        <taxon>eudicotyledons</taxon>
        <taxon>Gunneridae</taxon>
        <taxon>Pentapetalae</taxon>
        <taxon>rosids</taxon>
        <taxon>malvids</taxon>
        <taxon>Brassicales</taxon>
        <taxon>Brassicaceae</taxon>
        <taxon>Camelineae</taxon>
        <taxon>Arabidopsis</taxon>
    </lineage>
</organism>
<evidence type="ECO:0000250" key="1">
    <source>
        <dbReference type="UniProtKB" id="O49686"/>
    </source>
</evidence>
<evidence type="ECO:0000250" key="2">
    <source>
        <dbReference type="UniProtKB" id="O80920"/>
    </source>
</evidence>
<evidence type="ECO:0000250" key="3">
    <source>
        <dbReference type="UniProtKB" id="Q84MC7"/>
    </source>
</evidence>
<evidence type="ECO:0000250" key="4">
    <source>
        <dbReference type="UniProtKB" id="Q8VZS8"/>
    </source>
</evidence>
<evidence type="ECO:0000250" key="5">
    <source>
        <dbReference type="UniProtKB" id="Q9FLB1"/>
    </source>
</evidence>
<evidence type="ECO:0000269" key="6">
    <source>
    </source>
</evidence>
<evidence type="ECO:0000305" key="7"/>
<keyword id="KW-0938">Abscisic acid signaling pathway</keyword>
<keyword id="KW-1003">Cell membrane</keyword>
<keyword id="KW-0963">Cytoplasm</keyword>
<keyword id="KW-0472">Membrane</keyword>
<keyword id="KW-0539">Nucleus</keyword>
<keyword id="KW-0650">Protein phosphatase inhibitor</keyword>
<keyword id="KW-0675">Receptor</keyword>
<keyword id="KW-1185">Reference proteome</keyword>
<sequence length="161" mass="17805">METSQKYHTCGSTLVQTIDAPLSLVWSILRRFDNPQAYKQFVKTCNLSSGDGGEGSVREVTVVSGLPAEFSRERLDELDDESHVMMISIIGGDHRLVNYRSKTMAFVAADTEEKTVVVESYVVDVPEGNSEEETTSFADTIVGFNLKSLAKLSERVAHLKL</sequence>
<accession>Q9FJ50</accession>
<proteinExistence type="evidence at protein level"/>
<dbReference type="EMBL" id="AB016870">
    <property type="protein sequence ID" value="BAB09314.1"/>
    <property type="molecule type" value="Genomic_DNA"/>
</dbReference>
<dbReference type="EMBL" id="CP002688">
    <property type="protein sequence ID" value="AED95308.1"/>
    <property type="molecule type" value="Genomic_DNA"/>
</dbReference>
<dbReference type="RefSeq" id="NP_199398.1">
    <property type="nucleotide sequence ID" value="NM_123954.2"/>
</dbReference>
<dbReference type="SMR" id="Q9FJ50"/>
<dbReference type="BioGRID" id="19875">
    <property type="interactions" value="10"/>
</dbReference>
<dbReference type="FunCoup" id="Q9FJ50">
    <property type="interactions" value="364"/>
</dbReference>
<dbReference type="IntAct" id="Q9FJ50">
    <property type="interactions" value="7"/>
</dbReference>
<dbReference type="STRING" id="3702.Q9FJ50"/>
<dbReference type="PaxDb" id="3702-AT5G45860.1"/>
<dbReference type="ProteomicsDB" id="226008"/>
<dbReference type="EnsemblPlants" id="AT5G45860.1">
    <property type="protein sequence ID" value="AT5G45860.1"/>
    <property type="gene ID" value="AT5G45860"/>
</dbReference>
<dbReference type="GeneID" id="834626"/>
<dbReference type="Gramene" id="AT5G45860.1">
    <property type="protein sequence ID" value="AT5G45860.1"/>
    <property type="gene ID" value="AT5G45860"/>
</dbReference>
<dbReference type="KEGG" id="ath:AT5G45860"/>
<dbReference type="Araport" id="AT5G45860"/>
<dbReference type="TAIR" id="AT5G45860">
    <property type="gene designation" value="PYL11"/>
</dbReference>
<dbReference type="eggNOG" id="ENOG502RY2P">
    <property type="taxonomic scope" value="Eukaryota"/>
</dbReference>
<dbReference type="HOGENOM" id="CLU_077517_2_0_1"/>
<dbReference type="InParanoid" id="Q9FJ50"/>
<dbReference type="OMA" id="LPNQCGS"/>
<dbReference type="PhylomeDB" id="Q9FJ50"/>
<dbReference type="PRO" id="PR:Q9FJ50"/>
<dbReference type="Proteomes" id="UP000006548">
    <property type="component" value="Chromosome 5"/>
</dbReference>
<dbReference type="ExpressionAtlas" id="Q9FJ50">
    <property type="expression patterns" value="baseline and differential"/>
</dbReference>
<dbReference type="GO" id="GO:0005737">
    <property type="term" value="C:cytoplasm"/>
    <property type="evidence" value="ECO:0000250"/>
    <property type="project" value="UniProtKB"/>
</dbReference>
<dbReference type="GO" id="GO:0005634">
    <property type="term" value="C:nucleus"/>
    <property type="evidence" value="ECO:0000250"/>
    <property type="project" value="UniProtKB"/>
</dbReference>
<dbReference type="GO" id="GO:0005886">
    <property type="term" value="C:plasma membrane"/>
    <property type="evidence" value="ECO:0007669"/>
    <property type="project" value="UniProtKB-SubCell"/>
</dbReference>
<dbReference type="GO" id="GO:0010427">
    <property type="term" value="F:abscisic acid binding"/>
    <property type="evidence" value="ECO:0000250"/>
    <property type="project" value="UniProtKB"/>
</dbReference>
<dbReference type="GO" id="GO:0042803">
    <property type="term" value="F:protein homodimerization activity"/>
    <property type="evidence" value="ECO:0000250"/>
    <property type="project" value="UniProtKB"/>
</dbReference>
<dbReference type="GO" id="GO:0004864">
    <property type="term" value="F:protein phosphatase inhibitor activity"/>
    <property type="evidence" value="ECO:0000314"/>
    <property type="project" value="UniProtKB"/>
</dbReference>
<dbReference type="GO" id="GO:0038023">
    <property type="term" value="F:signaling receptor activity"/>
    <property type="evidence" value="ECO:0000250"/>
    <property type="project" value="UniProtKB"/>
</dbReference>
<dbReference type="GO" id="GO:0009738">
    <property type="term" value="P:abscisic acid-activated signaling pathway"/>
    <property type="evidence" value="ECO:0000250"/>
    <property type="project" value="UniProtKB"/>
</dbReference>
<dbReference type="CDD" id="cd07821">
    <property type="entry name" value="PYR_PYL_RCAR_like"/>
    <property type="match status" value="1"/>
</dbReference>
<dbReference type="FunFam" id="3.30.530.20:FF:000050">
    <property type="entry name" value="Abscisic acid receptor PYL13"/>
    <property type="match status" value="1"/>
</dbReference>
<dbReference type="Gene3D" id="3.30.530.20">
    <property type="match status" value="1"/>
</dbReference>
<dbReference type="InterPro" id="IPR050279">
    <property type="entry name" value="Plant_def-hormone_signal"/>
</dbReference>
<dbReference type="InterPro" id="IPR019587">
    <property type="entry name" value="Polyketide_cyclase/dehydratase"/>
</dbReference>
<dbReference type="InterPro" id="IPR023393">
    <property type="entry name" value="START-like_dom_sf"/>
</dbReference>
<dbReference type="PANTHER" id="PTHR31213:SF82">
    <property type="entry name" value="ABSCISIC ACID RECEPTOR PYL11-RELATED"/>
    <property type="match status" value="1"/>
</dbReference>
<dbReference type="PANTHER" id="PTHR31213">
    <property type="entry name" value="OS08G0374000 PROTEIN-RELATED"/>
    <property type="match status" value="1"/>
</dbReference>
<dbReference type="Pfam" id="PF10604">
    <property type="entry name" value="Polyketide_cyc2"/>
    <property type="match status" value="1"/>
</dbReference>
<dbReference type="SUPFAM" id="SSF55961">
    <property type="entry name" value="Bet v1-like"/>
    <property type="match status" value="1"/>
</dbReference>
<protein>
    <recommendedName>
        <fullName>Abscisic acid receptor PYL11</fullName>
    </recommendedName>
    <alternativeName>
        <fullName>PYR1-like protein 11</fullName>
    </alternativeName>
    <alternativeName>
        <fullName>Regulatory components of ABA receptor 5</fullName>
    </alternativeName>
</protein>
<comment type="function">
    <text evidence="1 6">Receptor for abscisic acid (ABA) required for ABA-mediated responses such as stomatal closure and germination inhibition. Inhibits the activity of group-A protein phosphatases type 2C (PP2Cs) when activated by ABA (By similarity). Suppresses the phosphatase activity of TOPP1 in a dose-dependent manner in vitro (PubMed:26943172).</text>
</comment>
<comment type="subunit">
    <text evidence="1 6">Homodimer. Binds ABA on one subunit only. Interacts with PP2Cs. Binds to CARs protein in an ABA-independent manner, both at the plasma membrane and in the nucleus (By similarity). Interacts with I-2 and TOPP1 (PubMed:26943172).</text>
</comment>
<comment type="interaction">
    <interactant intactId="EBI-2363233">
        <id>Q9FJ50</id>
    </interactant>
    <interactant intactId="EBI-782526">
        <id>P49597</id>
        <label>ABI1</label>
    </interactant>
    <organismsDiffer>false</organismsDiffer>
    <experiments>3</experiments>
</comment>
<comment type="interaction">
    <interactant intactId="EBI-2363233">
        <id>Q9FJ50</id>
    </interactant>
    <interactant intactId="EBI-1573499">
        <id>Q9LNW3</id>
        <label>AIP1</label>
    </interactant>
    <organismsDiffer>false</organismsDiffer>
    <experiments>3</experiments>
</comment>
<comment type="interaction">
    <interactant intactId="EBI-2363233">
        <id>Q9FJ50</id>
    </interactant>
    <interactant intactId="EBI-4441103">
        <id>Q9ZW21</id>
        <label>At2g29380</label>
    </interactant>
    <organismsDiffer>false</organismsDiffer>
    <experiments>7</experiments>
</comment>
<comment type="interaction">
    <interactant intactId="EBI-2363233">
        <id>Q9FJ50</id>
    </interactant>
    <interactant intactId="EBI-2309302">
        <id>Q9CAJ0</id>
        <label>HAB1</label>
    </interactant>
    <organismsDiffer>false</organismsDiffer>
    <experiments>4</experiments>
</comment>
<comment type="interaction">
    <interactant intactId="EBI-2363233">
        <id>Q9FJ50</id>
    </interactant>
    <interactant intactId="EBI-2324225">
        <id>Q9SN12</id>
        <label>MYB77</label>
    </interactant>
    <organismsDiffer>false</organismsDiffer>
    <experiments>3</experiments>
</comment>
<comment type="interaction">
    <interactant intactId="EBI-2363233">
        <id>Q9FJ50</id>
    </interactant>
    <interactant intactId="EBI-4433263">
        <id>Q8H157</id>
        <label>NPF4.6</label>
    </interactant>
    <organismsDiffer>false</organismsDiffer>
    <experiments>3</experiments>
</comment>
<comment type="interaction">
    <interactant intactId="EBI-2363233">
        <id>Q9FJ50</id>
    </interactant>
    <interactant intactId="EBI-4426178">
        <id>Q9LT89</id>
        <label>TCP19</label>
    </interactant>
    <organismsDiffer>false</organismsDiffer>
    <experiments>3</experiments>
</comment>
<comment type="subcellular location">
    <subcellularLocation>
        <location evidence="5">Cytoplasm</location>
    </subcellularLocation>
    <subcellularLocation>
        <location evidence="1">Nucleus</location>
    </subcellularLocation>
    <subcellularLocation>
        <location evidence="1">Cell membrane</location>
    </subcellularLocation>
    <text evidence="2">Localizes at the plasma membrane in the presence of a CAR protein.</text>
</comment>
<comment type="domain">
    <text evidence="4">Upon interaction with ABA, the 'latch' and 'gate' loops change in conformation leading to a tight dimerization and the creation a surface that enables the receptor to dock into and inhibit the PP2C active site.</text>
</comment>
<comment type="similarity">
    <text evidence="7">Belongs to the PYR/PYL/RCAR abscisic acid intracellular receptor family.</text>
</comment>
<reference key="1">
    <citation type="journal article" date="1998" name="DNA Res.">
        <title>Structural analysis of Arabidopsis thaliana chromosome 5. VIII. Sequence features of the regions of 1,081,958 bp covered by seventeen physically assigned P1 and TAC clones.</title>
        <authorList>
            <person name="Asamizu E."/>
            <person name="Sato S."/>
            <person name="Kaneko T."/>
            <person name="Nakamura Y."/>
            <person name="Kotani H."/>
            <person name="Miyajima N."/>
            <person name="Tabata S."/>
        </authorList>
    </citation>
    <scope>NUCLEOTIDE SEQUENCE [LARGE SCALE GENOMIC DNA]</scope>
    <source>
        <strain>cv. Columbia</strain>
    </source>
</reference>
<reference key="2">
    <citation type="journal article" date="2017" name="Plant J.">
        <title>Araport11: a complete reannotation of the Arabidopsis thaliana reference genome.</title>
        <authorList>
            <person name="Cheng C.Y."/>
            <person name="Krishnakumar V."/>
            <person name="Chan A.P."/>
            <person name="Thibaud-Nissen F."/>
            <person name="Schobel S."/>
            <person name="Town C.D."/>
        </authorList>
    </citation>
    <scope>GENOME REANNOTATION</scope>
    <source>
        <strain>cv. Columbia</strain>
    </source>
</reference>
<reference key="3">
    <citation type="journal article" date="2009" name="Science">
        <title>Regulators of PP2C phosphatase activity function as abscisic acid sensors.</title>
        <authorList>
            <person name="Ma Y."/>
            <person name="Szostkiewicz I."/>
            <person name="Korte A."/>
            <person name="Moes D."/>
            <person name="Yang Y."/>
            <person name="Christmann A."/>
            <person name="Grill E."/>
        </authorList>
    </citation>
    <scope>GENE FAMILY</scope>
</reference>
<reference key="4">
    <citation type="journal article" date="2009" name="Science">
        <title>Abscisic acid inhibits type 2C protein phosphatases via the PYR/PYL family of START proteins.</title>
        <authorList>
            <person name="Park S.-Y."/>
            <person name="Fung P."/>
            <person name="Nishimura N."/>
            <person name="Jensen D.R."/>
            <person name="Fujii H."/>
            <person name="Zhao Y."/>
            <person name="Lumba S."/>
            <person name="Santiago J."/>
            <person name="Rodrigues A."/>
            <person name="Chow T.F."/>
            <person name="Alfred S.E."/>
            <person name="Bonetta D."/>
            <person name="Finkelstein R."/>
            <person name="Provart N.J."/>
            <person name="Desveaux D."/>
            <person name="Rodriguez P.L."/>
            <person name="McCourt P."/>
            <person name="Zhu J.-K."/>
            <person name="Schroeder J.I."/>
            <person name="Volkman B.F."/>
            <person name="Cutler S.R."/>
        </authorList>
    </citation>
    <scope>GENE FAMILY</scope>
    <scope>NOMENCLATURE</scope>
</reference>
<reference key="5">
    <citation type="journal article" date="2013" name="PLoS ONE">
        <title>Structural insights into the abscisic acid stereospecificity by the ABA receptors PYR/PYL/RCAR.</title>
        <authorList>
            <person name="Zhang X."/>
            <person name="Jiang L."/>
            <person name="Wang G."/>
            <person name="Yu L."/>
            <person name="Zhang Q."/>
            <person name="Xin Q."/>
            <person name="Wu W."/>
            <person name="Gong Z."/>
            <person name="Chen Z."/>
        </authorList>
    </citation>
    <scope>GENE FAMILY</scope>
</reference>
<reference key="6">
    <citation type="journal article" date="2016" name="PLoS Genet.">
        <title>Type one protein phosphatase 1 and its regulatory protein inhibitor 2 negatively regulate ABA signaling.</title>
        <authorList>
            <person name="Hou Y.J."/>
            <person name="Zhu Y."/>
            <person name="Wang P."/>
            <person name="Zhao Y."/>
            <person name="Xie S."/>
            <person name="Batelli G."/>
            <person name="Wang B."/>
            <person name="Duan C.G."/>
            <person name="Wang X."/>
            <person name="Xing L."/>
            <person name="Lei M."/>
            <person name="Yan J."/>
            <person name="Zhu X."/>
            <person name="Zhu J.K."/>
        </authorList>
    </citation>
    <scope>FUNCTION</scope>
    <scope>INTERACTION WITH I-2 AND TOPP1</scope>
</reference>
<name>PYL11_ARATH</name>
<feature type="chain" id="PRO_0000391746" description="Abscisic acid receptor PYL11">
    <location>
        <begin position="1"/>
        <end position="161"/>
    </location>
</feature>
<feature type="region of interest" description="START-like">
    <location>
        <begin position="3"/>
        <end position="154"/>
    </location>
</feature>
<feature type="short sequence motif" description="Gate loop" evidence="4">
    <location>
        <begin position="64"/>
        <end position="68"/>
    </location>
</feature>
<feature type="short sequence motif" description="Latch loop" evidence="4">
    <location>
        <begin position="94"/>
        <end position="96"/>
    </location>
</feature>
<feature type="binding site" evidence="1">
    <location>
        <position position="39"/>
    </location>
    <ligand>
        <name>abscisate</name>
        <dbReference type="ChEBI" id="CHEBI:62432"/>
    </ligand>
</feature>
<feature type="binding site" evidence="1">
    <location>
        <begin position="68"/>
        <end position="73"/>
    </location>
    <ligand>
        <name>abscisate</name>
        <dbReference type="ChEBI" id="CHEBI:62432"/>
    </ligand>
</feature>
<feature type="binding site" evidence="1">
    <location>
        <begin position="95"/>
        <end position="101"/>
    </location>
    <ligand>
        <name>abscisate</name>
        <dbReference type="ChEBI" id="CHEBI:62432"/>
    </ligand>
</feature>
<feature type="binding site" evidence="1">
    <location>
        <position position="119"/>
    </location>
    <ligand>
        <name>abscisate</name>
        <dbReference type="ChEBI" id="CHEBI:62432"/>
    </ligand>
</feature>
<feature type="site" description="Involved in interactions with PP2Cs" evidence="1">
    <location>
        <position position="67"/>
    </location>
</feature>
<feature type="site" description="Involved in ABA binding" evidence="3">
    <location>
        <position position="87"/>
    </location>
</feature>
<feature type="site" description="Involved in interactions with PP2Cs" evidence="1">
    <location>
        <position position="130"/>
    </location>
</feature>